<accession>Q3INK4</accession>
<dbReference type="EMBL" id="CR936257">
    <property type="protein sequence ID" value="CAI50299.1"/>
    <property type="molecule type" value="Genomic_DNA"/>
</dbReference>
<dbReference type="RefSeq" id="WP_011323914.1">
    <property type="nucleotide sequence ID" value="NC_007426.1"/>
</dbReference>
<dbReference type="SMR" id="Q3INK4"/>
<dbReference type="STRING" id="348780.NP_4416A"/>
<dbReference type="EnsemblBacteria" id="CAI50299">
    <property type="protein sequence ID" value="CAI50299"/>
    <property type="gene ID" value="NP_4416A"/>
</dbReference>
<dbReference type="GeneID" id="3702055"/>
<dbReference type="KEGG" id="nph:NP_4416A"/>
<dbReference type="eggNOG" id="arCOG04179">
    <property type="taxonomic scope" value="Archaea"/>
</dbReference>
<dbReference type="HOGENOM" id="CLU_122978_3_0_2"/>
<dbReference type="OrthoDB" id="7912at2157"/>
<dbReference type="Proteomes" id="UP000002698">
    <property type="component" value="Chromosome"/>
</dbReference>
<dbReference type="GO" id="GO:0005829">
    <property type="term" value="C:cytosol"/>
    <property type="evidence" value="ECO:0007669"/>
    <property type="project" value="TreeGrafter"/>
</dbReference>
<dbReference type="GO" id="GO:0003677">
    <property type="term" value="F:DNA binding"/>
    <property type="evidence" value="ECO:0007669"/>
    <property type="project" value="UniProtKB-UniRule"/>
</dbReference>
<dbReference type="Gene3D" id="1.10.8.140">
    <property type="entry name" value="PDCD5-like"/>
    <property type="match status" value="1"/>
</dbReference>
<dbReference type="HAMAP" id="MF_00026">
    <property type="entry name" value="dsDNA_bind"/>
    <property type="match status" value="1"/>
</dbReference>
<dbReference type="InterPro" id="IPR022889">
    <property type="entry name" value="DNA_bind_arc"/>
</dbReference>
<dbReference type="InterPro" id="IPR002836">
    <property type="entry name" value="PDCD5-like"/>
</dbReference>
<dbReference type="InterPro" id="IPR036883">
    <property type="entry name" value="PDCD5-like_sf"/>
</dbReference>
<dbReference type="NCBIfam" id="NF003268">
    <property type="entry name" value="PRK04239.1"/>
    <property type="match status" value="1"/>
</dbReference>
<dbReference type="PANTHER" id="PTHR10840">
    <property type="entry name" value="PROGRAMMED CELL DEATH PROTEIN 5"/>
    <property type="match status" value="1"/>
</dbReference>
<dbReference type="PANTHER" id="PTHR10840:SF0">
    <property type="entry name" value="PROGRAMMED CELL DEATH PROTEIN 5"/>
    <property type="match status" value="1"/>
</dbReference>
<dbReference type="Pfam" id="PF01984">
    <property type="entry name" value="dsDNA_bind"/>
    <property type="match status" value="1"/>
</dbReference>
<dbReference type="PIRSF" id="PIRSF015730">
    <property type="entry name" value="TFAR19"/>
    <property type="match status" value="1"/>
</dbReference>
<dbReference type="SUPFAM" id="SSF46950">
    <property type="entry name" value="Double-stranded DNA-binding domain"/>
    <property type="match status" value="1"/>
</dbReference>
<feature type="chain" id="PRO_0000284567" description="DNA-binding protein NP_4416A">
    <location>
        <begin position="1"/>
        <end position="115"/>
    </location>
</feature>
<feature type="region of interest" description="Disordered" evidence="2">
    <location>
        <begin position="1"/>
        <end position="46"/>
    </location>
</feature>
<feature type="compositionally biased region" description="Acidic residues" evidence="2">
    <location>
        <begin position="1"/>
        <end position="11"/>
    </location>
</feature>
<feature type="compositionally biased region" description="Basic and acidic residues" evidence="2">
    <location>
        <begin position="12"/>
        <end position="25"/>
    </location>
</feature>
<feature type="compositionally biased region" description="Low complexity" evidence="2">
    <location>
        <begin position="29"/>
        <end position="41"/>
    </location>
</feature>
<keyword id="KW-0238">DNA-binding</keyword>
<keyword id="KW-1185">Reference proteome</keyword>
<name>Y4416_NATPD</name>
<proteinExistence type="inferred from homology"/>
<comment type="similarity">
    <text evidence="1">Belongs to the PDCD5 family.</text>
</comment>
<sequence>MSGEPTDEDLEELRKKKMEQLKEQGGEGQSEAAEAQRQQAEAQKKAILRKTLTDGARKRLNTVQMSKPQFGEKVEQQIVALAQSGRIQGKIDEEKMKELLQEMKPDSQSFDIKRR</sequence>
<evidence type="ECO:0000255" key="1">
    <source>
        <dbReference type="HAMAP-Rule" id="MF_00026"/>
    </source>
</evidence>
<evidence type="ECO:0000256" key="2">
    <source>
        <dbReference type="SAM" id="MobiDB-lite"/>
    </source>
</evidence>
<protein>
    <recommendedName>
        <fullName evidence="1">DNA-binding protein NP_4416A</fullName>
    </recommendedName>
</protein>
<reference key="1">
    <citation type="journal article" date="2005" name="Genome Res.">
        <title>Living with two extremes: conclusions from the genome sequence of Natronomonas pharaonis.</title>
        <authorList>
            <person name="Falb M."/>
            <person name="Pfeiffer F."/>
            <person name="Palm P."/>
            <person name="Rodewald K."/>
            <person name="Hickmann V."/>
            <person name="Tittor J."/>
            <person name="Oesterhelt D."/>
        </authorList>
    </citation>
    <scope>NUCLEOTIDE SEQUENCE [LARGE SCALE GENOMIC DNA]</scope>
    <source>
        <strain>ATCC 35678 / DSM 2160 / CIP 103997 / JCM 8858 / NBRC 14720 / NCIMB 2260 / Gabara</strain>
    </source>
</reference>
<organism>
    <name type="scientific">Natronomonas pharaonis (strain ATCC 35678 / DSM 2160 / CIP 103997 / JCM 8858 / NBRC 14720 / NCIMB 2260 / Gabara)</name>
    <name type="common">Halobacterium pharaonis</name>
    <dbReference type="NCBI Taxonomy" id="348780"/>
    <lineage>
        <taxon>Archaea</taxon>
        <taxon>Methanobacteriati</taxon>
        <taxon>Methanobacteriota</taxon>
        <taxon>Stenosarchaea group</taxon>
        <taxon>Halobacteria</taxon>
        <taxon>Halobacteriales</taxon>
        <taxon>Haloarculaceae</taxon>
        <taxon>Natronomonas</taxon>
    </lineage>
</organism>
<gene>
    <name type="ordered locus">NP_4416A</name>
</gene>